<feature type="chain" id="PRO_0000151669" description="Hydroxylamine reductase">
    <location>
        <begin position="1"/>
        <end position="539"/>
    </location>
</feature>
<feature type="binding site" evidence="1">
    <location>
        <position position="3"/>
    </location>
    <ligand>
        <name>[4Fe-4S] cluster</name>
        <dbReference type="ChEBI" id="CHEBI:49883"/>
    </ligand>
</feature>
<feature type="binding site" evidence="1">
    <location>
        <position position="6"/>
    </location>
    <ligand>
        <name>[4Fe-4S] cluster</name>
        <dbReference type="ChEBI" id="CHEBI:49883"/>
    </ligand>
</feature>
<feature type="binding site" evidence="1">
    <location>
        <position position="14"/>
    </location>
    <ligand>
        <name>[4Fe-4S] cluster</name>
        <dbReference type="ChEBI" id="CHEBI:49883"/>
    </ligand>
</feature>
<feature type="binding site" evidence="1">
    <location>
        <position position="20"/>
    </location>
    <ligand>
        <name>[4Fe-4S] cluster</name>
        <dbReference type="ChEBI" id="CHEBI:49883"/>
    </ligand>
</feature>
<feature type="binding site" evidence="1">
    <location>
        <position position="232"/>
    </location>
    <ligand>
        <name>hybrid [4Fe-2O-2S] cluster</name>
        <dbReference type="ChEBI" id="CHEBI:60519"/>
    </ligand>
</feature>
<feature type="binding site" evidence="1">
    <location>
        <position position="256"/>
    </location>
    <ligand>
        <name>hybrid [4Fe-2O-2S] cluster</name>
        <dbReference type="ChEBI" id="CHEBI:60519"/>
    </ligand>
</feature>
<feature type="binding site" evidence="1">
    <location>
        <position position="300"/>
    </location>
    <ligand>
        <name>hybrid [4Fe-2O-2S] cluster</name>
        <dbReference type="ChEBI" id="CHEBI:60519"/>
    </ligand>
</feature>
<feature type="binding site" description="via persulfide group" evidence="1">
    <location>
        <position position="392"/>
    </location>
    <ligand>
        <name>hybrid [4Fe-2O-2S] cluster</name>
        <dbReference type="ChEBI" id="CHEBI:60519"/>
    </ligand>
</feature>
<feature type="binding site" evidence="1">
    <location>
        <position position="420"/>
    </location>
    <ligand>
        <name>hybrid [4Fe-2O-2S] cluster</name>
        <dbReference type="ChEBI" id="CHEBI:60519"/>
    </ligand>
</feature>
<feature type="binding site" evidence="1">
    <location>
        <position position="445"/>
    </location>
    <ligand>
        <name>hybrid [4Fe-2O-2S] cluster</name>
        <dbReference type="ChEBI" id="CHEBI:60519"/>
    </ligand>
</feature>
<feature type="binding site" evidence="1">
    <location>
        <position position="480"/>
    </location>
    <ligand>
        <name>hybrid [4Fe-2O-2S] cluster</name>
        <dbReference type="ChEBI" id="CHEBI:60519"/>
    </ligand>
</feature>
<feature type="binding site" evidence="1">
    <location>
        <position position="482"/>
    </location>
    <ligand>
        <name>hybrid [4Fe-2O-2S] cluster</name>
        <dbReference type="ChEBI" id="CHEBI:60519"/>
    </ligand>
</feature>
<feature type="modified residue" description="Cysteine persulfide" evidence="1">
    <location>
        <position position="392"/>
    </location>
</feature>
<name>HCP_CHLTE</name>
<organism>
    <name type="scientific">Chlorobaculum tepidum (strain ATCC 49652 / DSM 12025 / NBRC 103806 / TLS)</name>
    <name type="common">Chlorobium tepidum</name>
    <dbReference type="NCBI Taxonomy" id="194439"/>
    <lineage>
        <taxon>Bacteria</taxon>
        <taxon>Pseudomonadati</taxon>
        <taxon>Chlorobiota</taxon>
        <taxon>Chlorobiia</taxon>
        <taxon>Chlorobiales</taxon>
        <taxon>Chlorobiaceae</taxon>
        <taxon>Chlorobaculum</taxon>
    </lineage>
</organism>
<comment type="function">
    <text evidence="1">Catalyzes the reduction of hydroxylamine to form NH(3) and H(2)O.</text>
</comment>
<comment type="catalytic activity">
    <reaction evidence="1">
        <text>A + NH4(+) + H2O = hydroxylamine + AH2 + H(+)</text>
        <dbReference type="Rhea" id="RHEA:22052"/>
        <dbReference type="ChEBI" id="CHEBI:13193"/>
        <dbReference type="ChEBI" id="CHEBI:15377"/>
        <dbReference type="ChEBI" id="CHEBI:15378"/>
        <dbReference type="ChEBI" id="CHEBI:15429"/>
        <dbReference type="ChEBI" id="CHEBI:17499"/>
        <dbReference type="ChEBI" id="CHEBI:28938"/>
        <dbReference type="EC" id="1.7.99.1"/>
    </reaction>
</comment>
<comment type="cofactor">
    <cofactor evidence="1">
        <name>[4Fe-4S] cluster</name>
        <dbReference type="ChEBI" id="CHEBI:49883"/>
    </cofactor>
    <text evidence="1">Binds 1 [4Fe-4S] cluster.</text>
</comment>
<comment type="cofactor">
    <cofactor evidence="1">
        <name>hybrid [4Fe-2O-2S] cluster</name>
        <dbReference type="ChEBI" id="CHEBI:60519"/>
    </cofactor>
    <text evidence="1">Binds 1 hybrid [4Fe-2O-2S] cluster.</text>
</comment>
<comment type="subcellular location">
    <subcellularLocation>
        <location evidence="1">Cytoplasm</location>
    </subcellularLocation>
</comment>
<comment type="similarity">
    <text evidence="1">Belongs to the HCP family.</text>
</comment>
<keyword id="KW-0004">4Fe-4S</keyword>
<keyword id="KW-0963">Cytoplasm</keyword>
<keyword id="KW-0408">Iron</keyword>
<keyword id="KW-0411">Iron-sulfur</keyword>
<keyword id="KW-0479">Metal-binding</keyword>
<keyword id="KW-0560">Oxidoreductase</keyword>
<keyword id="KW-1185">Reference proteome</keyword>
<reference key="1">
    <citation type="journal article" date="2002" name="Proc. Natl. Acad. Sci. U.S.A.">
        <title>The complete genome sequence of Chlorobium tepidum TLS, a photosynthetic, anaerobic, green-sulfur bacterium.</title>
        <authorList>
            <person name="Eisen J.A."/>
            <person name="Nelson K.E."/>
            <person name="Paulsen I.T."/>
            <person name="Heidelberg J.F."/>
            <person name="Wu M."/>
            <person name="Dodson R.J."/>
            <person name="DeBoy R.T."/>
            <person name="Gwinn M.L."/>
            <person name="Nelson W.C."/>
            <person name="Haft D.H."/>
            <person name="Hickey E.K."/>
            <person name="Peterson J.D."/>
            <person name="Durkin A.S."/>
            <person name="Kolonay J.F."/>
            <person name="Yang F."/>
            <person name="Holt I.E."/>
            <person name="Umayam L.A."/>
            <person name="Mason T.M."/>
            <person name="Brenner M."/>
            <person name="Shea T.P."/>
            <person name="Parksey D.S."/>
            <person name="Nierman W.C."/>
            <person name="Feldblyum T.V."/>
            <person name="Hansen C.L."/>
            <person name="Craven M.B."/>
            <person name="Radune D."/>
            <person name="Vamathevan J.J."/>
            <person name="Khouri H.M."/>
            <person name="White O."/>
            <person name="Gruber T.M."/>
            <person name="Ketchum K.A."/>
            <person name="Venter J.C."/>
            <person name="Tettelin H."/>
            <person name="Bryant D.A."/>
            <person name="Fraser C.M."/>
        </authorList>
    </citation>
    <scope>NUCLEOTIDE SEQUENCE [LARGE SCALE GENOMIC DNA]</scope>
    <source>
        <strain>ATCC 49652 / DSM 12025 / NBRC 103806 / TLS</strain>
    </source>
</reference>
<gene>
    <name evidence="1" type="primary">hcp</name>
    <name type="ordered locus">CT1699</name>
</gene>
<proteinExistence type="inferred from homology"/>
<accession>Q8KBT4</accession>
<protein>
    <recommendedName>
        <fullName evidence="1">Hydroxylamine reductase</fullName>
        <ecNumber evidence="1">1.7.99.1</ecNumber>
    </recommendedName>
    <alternativeName>
        <fullName evidence="1">Hybrid-cluster protein</fullName>
        <shortName evidence="1">HCP</shortName>
    </alternativeName>
    <alternativeName>
        <fullName evidence="1">Prismane protein</fullName>
    </alternativeName>
</protein>
<dbReference type="EC" id="1.7.99.1" evidence="1"/>
<dbReference type="EMBL" id="AE006470">
    <property type="protein sequence ID" value="AAM72923.1"/>
    <property type="molecule type" value="Genomic_DNA"/>
</dbReference>
<dbReference type="RefSeq" id="NP_662581.1">
    <property type="nucleotide sequence ID" value="NC_002932.3"/>
</dbReference>
<dbReference type="SMR" id="Q8KBT4"/>
<dbReference type="STRING" id="194439.CT1699"/>
<dbReference type="EnsemblBacteria" id="AAM72923">
    <property type="protein sequence ID" value="AAM72923"/>
    <property type="gene ID" value="CT1699"/>
</dbReference>
<dbReference type="KEGG" id="cte:CT1699"/>
<dbReference type="PATRIC" id="fig|194439.7.peg.1534"/>
<dbReference type="eggNOG" id="COG1151">
    <property type="taxonomic scope" value="Bacteria"/>
</dbReference>
<dbReference type="HOGENOM" id="CLU_038344_2_0_10"/>
<dbReference type="OrthoDB" id="9761526at2"/>
<dbReference type="Proteomes" id="UP000001007">
    <property type="component" value="Chromosome"/>
</dbReference>
<dbReference type="GO" id="GO:0005737">
    <property type="term" value="C:cytoplasm"/>
    <property type="evidence" value="ECO:0007669"/>
    <property type="project" value="UniProtKB-SubCell"/>
</dbReference>
<dbReference type="GO" id="GO:0051539">
    <property type="term" value="F:4 iron, 4 sulfur cluster binding"/>
    <property type="evidence" value="ECO:0007669"/>
    <property type="project" value="UniProtKB-KW"/>
</dbReference>
<dbReference type="GO" id="GO:0050418">
    <property type="term" value="F:hydroxylamine reductase activity"/>
    <property type="evidence" value="ECO:0007669"/>
    <property type="project" value="UniProtKB-UniRule"/>
</dbReference>
<dbReference type="GO" id="GO:0046872">
    <property type="term" value="F:metal ion binding"/>
    <property type="evidence" value="ECO:0007669"/>
    <property type="project" value="UniProtKB-KW"/>
</dbReference>
<dbReference type="GO" id="GO:0004601">
    <property type="term" value="F:peroxidase activity"/>
    <property type="evidence" value="ECO:0007669"/>
    <property type="project" value="TreeGrafter"/>
</dbReference>
<dbReference type="GO" id="GO:0042542">
    <property type="term" value="P:response to hydrogen peroxide"/>
    <property type="evidence" value="ECO:0007669"/>
    <property type="project" value="TreeGrafter"/>
</dbReference>
<dbReference type="CDD" id="cd01914">
    <property type="entry name" value="HCP"/>
    <property type="match status" value="1"/>
</dbReference>
<dbReference type="FunFam" id="1.20.1270.20:FF:000001">
    <property type="entry name" value="Hydroxylamine reductase"/>
    <property type="match status" value="1"/>
</dbReference>
<dbReference type="FunFam" id="3.40.50.2030:FF:000001">
    <property type="entry name" value="Hydroxylamine reductase"/>
    <property type="match status" value="1"/>
</dbReference>
<dbReference type="FunFam" id="3.40.50.2030:FF:000002">
    <property type="entry name" value="Hydroxylamine reductase"/>
    <property type="match status" value="1"/>
</dbReference>
<dbReference type="Gene3D" id="1.20.1270.20">
    <property type="match status" value="2"/>
</dbReference>
<dbReference type="Gene3D" id="3.40.50.2030">
    <property type="match status" value="2"/>
</dbReference>
<dbReference type="HAMAP" id="MF_00069">
    <property type="entry name" value="Hydroxylam_reduct"/>
    <property type="match status" value="1"/>
</dbReference>
<dbReference type="InterPro" id="IPR004137">
    <property type="entry name" value="HCP/CODH"/>
</dbReference>
<dbReference type="InterPro" id="IPR010048">
    <property type="entry name" value="Hydroxylam_reduct"/>
</dbReference>
<dbReference type="InterPro" id="IPR016099">
    <property type="entry name" value="Prismane-like_a/b-sand"/>
</dbReference>
<dbReference type="InterPro" id="IPR011254">
    <property type="entry name" value="Prismane-like_sf"/>
</dbReference>
<dbReference type="InterPro" id="IPR016100">
    <property type="entry name" value="Prismane_a-bundle"/>
</dbReference>
<dbReference type="NCBIfam" id="TIGR01703">
    <property type="entry name" value="hybrid_clust"/>
    <property type="match status" value="1"/>
</dbReference>
<dbReference type="NCBIfam" id="NF003658">
    <property type="entry name" value="PRK05290.1"/>
    <property type="match status" value="1"/>
</dbReference>
<dbReference type="PANTHER" id="PTHR30109">
    <property type="entry name" value="HYDROXYLAMINE REDUCTASE"/>
    <property type="match status" value="1"/>
</dbReference>
<dbReference type="PANTHER" id="PTHR30109:SF0">
    <property type="entry name" value="HYDROXYLAMINE REDUCTASE"/>
    <property type="match status" value="1"/>
</dbReference>
<dbReference type="Pfam" id="PF03063">
    <property type="entry name" value="Prismane"/>
    <property type="match status" value="1"/>
</dbReference>
<dbReference type="PIRSF" id="PIRSF000076">
    <property type="entry name" value="HCP"/>
    <property type="match status" value="1"/>
</dbReference>
<dbReference type="SUPFAM" id="SSF56821">
    <property type="entry name" value="Prismane protein-like"/>
    <property type="match status" value="1"/>
</dbReference>
<evidence type="ECO:0000255" key="1">
    <source>
        <dbReference type="HAMAP-Rule" id="MF_00069"/>
    </source>
</evidence>
<sequence>MHCDQCQESIKGGCNVRGVCGKDELTAKLQDTLIYAAEGIALCAEGFEGKIDRKYGQFISECLFVTVTNTNFDDVAIVEQIRKALAMRDEVRALAGTTPAHDAANWSGSTKEEFLAKAAACSIDSLSADPDLRSLKSLILYGIKGLAAYTDHAAVLGYHDDDIYAFYVKGLSALTKELPADELLGLVMECGATAVKAMALLDKANTETYGNPEITTVKTGVGTRPGILISGHDLRDMEDLLKQTEGTGVDVYTHCEMLPAHYYPAFKKYDHFVGNYGNSWWSQDREFESFNGPILMTTNCIVPVRESYRGRMFTTGMAGYPGLKHIPARPDGGSKDFSEIIELAKTCKPPIEIENGEIVGGFAHTQVLALADKVVDAVKSGAIRRFVVMAGCDGRHNSRQYYTDVAETLPKDTVILTAGCAKYRYNKLELGDIGGIPRVLDAGQCNDSYSLAVIAMKLQEVFGLENINDLPISYDIAWYEQKAVTVLLALLFLGVKGIRLGPTLPEFLTPNIATTLVKLFDLKPIGTVEADVEAMMAGN</sequence>